<organism>
    <name type="scientific">Homo sapiens</name>
    <name type="common">Human</name>
    <dbReference type="NCBI Taxonomy" id="9606"/>
    <lineage>
        <taxon>Eukaryota</taxon>
        <taxon>Metazoa</taxon>
        <taxon>Chordata</taxon>
        <taxon>Craniata</taxon>
        <taxon>Vertebrata</taxon>
        <taxon>Euteleostomi</taxon>
        <taxon>Mammalia</taxon>
        <taxon>Eutheria</taxon>
        <taxon>Euarchontoglires</taxon>
        <taxon>Primates</taxon>
        <taxon>Haplorrhini</taxon>
        <taxon>Catarrhini</taxon>
        <taxon>Hominidae</taxon>
        <taxon>Homo</taxon>
    </lineage>
</organism>
<evidence type="ECO:0000250" key="1"/>
<evidence type="ECO:0000250" key="2">
    <source>
        <dbReference type="UniProtKB" id="Q06330"/>
    </source>
</evidence>
<evidence type="ECO:0000256" key="3">
    <source>
        <dbReference type="SAM" id="MobiDB-lite"/>
    </source>
</evidence>
<evidence type="ECO:0000303" key="4">
    <source ref="1"/>
</evidence>
<evidence type="ECO:0000303" key="5">
    <source ref="2"/>
</evidence>
<evidence type="ECO:0000305" key="6"/>
<sequence length="517" mass="56751">MDPAGAADPSVPPNPLTHLSLQDRSEMQLQSEADRRSLPGTWTRSSPEHTTILRGGVRRCLQQQCEQTVRILHAKVAQKSYGNEKRFFCPPPCVYLSGPGWRVKPGQDQAHQAGETGPTVCGYMGLDSASGSATETQKLNFEQQPDSREFGCAKTLYISDADKRKHFRLVLRLVLRGGRELGTFHSRLIKVISKPSQKKQSLKNTDLCISSGSKVSLFNRLRSQTVSTRYLSVEDGAFVASARQWAAFTLHLADGHSAQGDFPPREGYVRYGSLVQLVCTVTGITLPPMIIRKVAKQCALLDVDEPISQLHKCAFQFPGSPPGGGGTYLCLATEKVVQFQASPCPKEANRALLNDSSCWTIIGTESVEFSFSTSLACTLEPVTPVPLISTLELSGGGDVATLELHGENFHAGLKVWFGDVEAETMYRSPRSLVCVVPDVAAFCSDWRWLRAPITIPMSLVRADGLFYPSAFSFTYTPEYSVRPGHPGVPEPATDADALLESIHQEFTRTNFHLFIQT</sequence>
<gene>
    <name type="primary">RBPJL</name>
    <name type="synonym">RBPL</name>
    <name type="synonym">RBPSUHL</name>
</gene>
<proteinExistence type="evidence at protein level"/>
<feature type="chain" id="PRO_0000208570" description="Recombining binding protein suppressor of hairless-like protein">
    <location>
        <begin position="1"/>
        <end position="517"/>
    </location>
</feature>
<feature type="domain" description="IPT/TIG">
    <location>
        <begin position="387"/>
        <end position="512"/>
    </location>
</feature>
<feature type="region of interest" description="Disordered" evidence="3">
    <location>
        <begin position="26"/>
        <end position="48"/>
    </location>
</feature>
<feature type="region of interest" description="DNA-binding" evidence="2">
    <location>
        <begin position="78"/>
        <end position="88"/>
    </location>
</feature>
<feature type="region of interest" description="DNA-binding" evidence="2">
    <location>
        <begin position="193"/>
        <end position="198"/>
    </location>
</feature>
<feature type="region of interest" description="DNA-binding" evidence="2">
    <location>
        <begin position="220"/>
        <end position="225"/>
    </location>
</feature>
<feature type="compositionally biased region" description="Basic and acidic residues" evidence="3">
    <location>
        <begin position="26"/>
        <end position="37"/>
    </location>
</feature>
<feature type="splice variant" id="VSP_039150" description="In isoform 2." evidence="4 5">
    <location>
        <position position="427"/>
    </location>
</feature>
<feature type="sequence conflict" description="In Ref. 2; BAA86121/BAA88232." evidence="6" ref="2">
    <original>SPRS</original>
    <variation>YGVEPAV</variation>
    <location>
        <begin position="428"/>
        <end position="431"/>
    </location>
</feature>
<dbReference type="EMBL" id="AB027710">
    <property type="protein sequence ID" value="BAA87051.1"/>
    <property type="molecule type" value="mRNA"/>
</dbReference>
<dbReference type="EMBL" id="AB024964">
    <property type="protein sequence ID" value="BAA88232.1"/>
    <property type="molecule type" value="mRNA"/>
</dbReference>
<dbReference type="EMBL" id="AB026048">
    <property type="protein sequence ID" value="BAA86121.1"/>
    <property type="molecule type" value="mRNA"/>
</dbReference>
<dbReference type="EMBL" id="AL021578">
    <property type="status" value="NOT_ANNOTATED_CDS"/>
    <property type="molecule type" value="Genomic_DNA"/>
</dbReference>
<dbReference type="EMBL" id="CH471077">
    <property type="protein sequence ID" value="EAW75864.1"/>
    <property type="molecule type" value="Genomic_DNA"/>
</dbReference>
<dbReference type="CCDS" id="CCDS13349.1">
    <molecule id="Q9UBG7-1"/>
</dbReference>
<dbReference type="CCDS" id="CCDS63283.1">
    <molecule id="Q9UBG7-2"/>
</dbReference>
<dbReference type="RefSeq" id="NP_001268377.1">
    <property type="nucleotide sequence ID" value="NM_001281448.1"/>
</dbReference>
<dbReference type="RefSeq" id="NP_001268378.1">
    <molecule id="Q9UBG7-2"/>
    <property type="nucleotide sequence ID" value="NM_001281449.2"/>
</dbReference>
<dbReference type="RefSeq" id="NP_055091.2">
    <molecule id="Q9UBG7-1"/>
    <property type="nucleotide sequence ID" value="NM_014276.3"/>
</dbReference>
<dbReference type="SMR" id="Q9UBG7"/>
<dbReference type="BioGRID" id="116448">
    <property type="interactions" value="121"/>
</dbReference>
<dbReference type="DIP" id="DIP-60277N"/>
<dbReference type="FunCoup" id="Q9UBG7">
    <property type="interactions" value="135"/>
</dbReference>
<dbReference type="IntAct" id="Q9UBG7">
    <property type="interactions" value="8"/>
</dbReference>
<dbReference type="STRING" id="9606.ENSP00000341243"/>
<dbReference type="GlyGen" id="Q9UBG7">
    <property type="glycosylation" value="1 site, 1 O-linked glycan (1 site)"/>
</dbReference>
<dbReference type="iPTMnet" id="Q9UBG7"/>
<dbReference type="PhosphoSitePlus" id="Q9UBG7"/>
<dbReference type="BioMuta" id="RBPJL"/>
<dbReference type="DMDM" id="296452986"/>
<dbReference type="jPOST" id="Q9UBG7"/>
<dbReference type="MassIVE" id="Q9UBG7"/>
<dbReference type="PaxDb" id="9606-ENSP00000341243"/>
<dbReference type="PeptideAtlas" id="Q9UBG7"/>
<dbReference type="ProteomicsDB" id="83966">
    <molecule id="Q9UBG7-1"/>
</dbReference>
<dbReference type="ProteomicsDB" id="83967">
    <molecule id="Q9UBG7-2"/>
</dbReference>
<dbReference type="Antibodypedia" id="3481">
    <property type="antibodies" value="158 antibodies from 25 providers"/>
</dbReference>
<dbReference type="DNASU" id="11317"/>
<dbReference type="Ensembl" id="ENST00000343694.8">
    <molecule id="Q9UBG7-1"/>
    <property type="protein sequence ID" value="ENSP00000341243.3"/>
    <property type="gene ID" value="ENSG00000124232.11"/>
</dbReference>
<dbReference type="Ensembl" id="ENST00000372743.5">
    <molecule id="Q9UBG7-2"/>
    <property type="protein sequence ID" value="ENSP00000361828.1"/>
    <property type="gene ID" value="ENSG00000124232.11"/>
</dbReference>
<dbReference type="GeneID" id="11317"/>
<dbReference type="KEGG" id="hsa:11317"/>
<dbReference type="MANE-Select" id="ENST00000343694.8">
    <property type="protein sequence ID" value="ENSP00000341243.3"/>
    <property type="RefSeq nucleotide sequence ID" value="NM_014276.4"/>
    <property type="RefSeq protein sequence ID" value="NP_055091.2"/>
</dbReference>
<dbReference type="UCSC" id="uc002xns.5">
    <molecule id="Q9UBG7-1"/>
    <property type="organism name" value="human"/>
</dbReference>
<dbReference type="AGR" id="HGNC:13761"/>
<dbReference type="CTD" id="11317"/>
<dbReference type="DisGeNET" id="11317"/>
<dbReference type="GeneCards" id="RBPJL"/>
<dbReference type="HGNC" id="HGNC:13761">
    <property type="gene designation" value="RBPJL"/>
</dbReference>
<dbReference type="HPA" id="ENSG00000124232">
    <property type="expression patterns" value="Tissue enriched (pancreas)"/>
</dbReference>
<dbReference type="MIM" id="616104">
    <property type="type" value="gene"/>
</dbReference>
<dbReference type="neXtProt" id="NX_Q9UBG7"/>
<dbReference type="OpenTargets" id="ENSG00000124232"/>
<dbReference type="PharmGKB" id="PA162400876"/>
<dbReference type="VEuPathDB" id="HostDB:ENSG00000124232"/>
<dbReference type="eggNOG" id="KOG3743">
    <property type="taxonomic scope" value="Eukaryota"/>
</dbReference>
<dbReference type="GeneTree" id="ENSGT00390000005197"/>
<dbReference type="HOGENOM" id="CLU_022207_0_0_1"/>
<dbReference type="InParanoid" id="Q9UBG7"/>
<dbReference type="OMA" id="VQGEHFH"/>
<dbReference type="OrthoDB" id="5600360at2759"/>
<dbReference type="PAN-GO" id="Q9UBG7">
    <property type="GO annotations" value="2 GO annotations based on evolutionary models"/>
</dbReference>
<dbReference type="PhylomeDB" id="Q9UBG7"/>
<dbReference type="TreeFam" id="TF314117"/>
<dbReference type="PathwayCommons" id="Q9UBG7"/>
<dbReference type="SignaLink" id="Q9UBG7"/>
<dbReference type="BioGRID-ORCS" id="11317">
    <property type="hits" value="14 hits in 1148 CRISPR screens"/>
</dbReference>
<dbReference type="ChiTaRS" id="RBPJL">
    <property type="organism name" value="human"/>
</dbReference>
<dbReference type="GenomeRNAi" id="11317"/>
<dbReference type="Pharos" id="Q9UBG7">
    <property type="development level" value="Tbio"/>
</dbReference>
<dbReference type="PRO" id="PR:Q9UBG7"/>
<dbReference type="Proteomes" id="UP000005640">
    <property type="component" value="Chromosome 20"/>
</dbReference>
<dbReference type="RNAct" id="Q9UBG7">
    <property type="molecule type" value="protein"/>
</dbReference>
<dbReference type="Bgee" id="ENSG00000124232">
    <property type="expression patterns" value="Expressed in body of pancreas and 99 other cell types or tissues"/>
</dbReference>
<dbReference type="ExpressionAtlas" id="Q9UBG7">
    <property type="expression patterns" value="baseline and differential"/>
</dbReference>
<dbReference type="GO" id="GO:0000785">
    <property type="term" value="C:chromatin"/>
    <property type="evidence" value="ECO:0000247"/>
    <property type="project" value="NTNU_SB"/>
</dbReference>
<dbReference type="GO" id="GO:0005634">
    <property type="term" value="C:nucleus"/>
    <property type="evidence" value="ECO:0007669"/>
    <property type="project" value="UniProtKB-SubCell"/>
</dbReference>
<dbReference type="GO" id="GO:0005667">
    <property type="term" value="C:transcription regulator complex"/>
    <property type="evidence" value="ECO:0007669"/>
    <property type="project" value="Ensembl"/>
</dbReference>
<dbReference type="GO" id="GO:0003682">
    <property type="term" value="F:chromatin binding"/>
    <property type="evidence" value="ECO:0007669"/>
    <property type="project" value="Ensembl"/>
</dbReference>
<dbReference type="GO" id="GO:0001228">
    <property type="term" value="F:DNA-binding transcription activator activity, RNA polymerase II-specific"/>
    <property type="evidence" value="ECO:0007669"/>
    <property type="project" value="Ensembl"/>
</dbReference>
<dbReference type="GO" id="GO:0003700">
    <property type="term" value="F:DNA-binding transcription factor activity"/>
    <property type="evidence" value="ECO:0000304"/>
    <property type="project" value="ProtInc"/>
</dbReference>
<dbReference type="GO" id="GO:0000981">
    <property type="term" value="F:DNA-binding transcription factor activity, RNA polymerase II-specific"/>
    <property type="evidence" value="ECO:0000247"/>
    <property type="project" value="NTNU_SB"/>
</dbReference>
<dbReference type="GO" id="GO:0000978">
    <property type="term" value="F:RNA polymerase II cis-regulatory region sequence-specific DNA binding"/>
    <property type="evidence" value="ECO:0000318"/>
    <property type="project" value="GO_Central"/>
</dbReference>
<dbReference type="GO" id="GO:0007165">
    <property type="term" value="P:signal transduction"/>
    <property type="evidence" value="ECO:0000304"/>
    <property type="project" value="ProtInc"/>
</dbReference>
<dbReference type="CDD" id="cd01176">
    <property type="entry name" value="IPT_RBP-Jkappa"/>
    <property type="match status" value="1"/>
</dbReference>
<dbReference type="FunFam" id="2.60.40.1450:FF:000002">
    <property type="entry name" value="Recombination signal binding protein for immunoglobulin kappa J region like"/>
    <property type="match status" value="1"/>
</dbReference>
<dbReference type="FunFam" id="2.80.10.50:FF:000003">
    <property type="entry name" value="recombining binding protein suppressor of hairless"/>
    <property type="match status" value="1"/>
</dbReference>
<dbReference type="FunFam" id="2.60.40.10:FF:000074">
    <property type="entry name" value="Recombining binding protein suppressor of hairless, putative"/>
    <property type="match status" value="1"/>
</dbReference>
<dbReference type="Gene3D" id="2.80.10.50">
    <property type="match status" value="1"/>
</dbReference>
<dbReference type="Gene3D" id="2.60.40.10">
    <property type="entry name" value="Immunoglobulins"/>
    <property type="match status" value="1"/>
</dbReference>
<dbReference type="Gene3D" id="2.60.40.1450">
    <property type="entry name" value="LAG1, DNA binding domain"/>
    <property type="match status" value="1"/>
</dbReference>
<dbReference type="InterPro" id="IPR015350">
    <property type="entry name" value="Beta-trefoil_DNA-bd_dom"/>
</dbReference>
<dbReference type="InterPro" id="IPR036358">
    <property type="entry name" value="BTD_sf"/>
</dbReference>
<dbReference type="InterPro" id="IPR040159">
    <property type="entry name" value="CLS_fam"/>
</dbReference>
<dbReference type="InterPro" id="IPR013783">
    <property type="entry name" value="Ig-like_fold"/>
</dbReference>
<dbReference type="InterPro" id="IPR014756">
    <property type="entry name" value="Ig_E-set"/>
</dbReference>
<dbReference type="InterPro" id="IPR008967">
    <property type="entry name" value="p53-like_TF_DNA-bd_sf"/>
</dbReference>
<dbReference type="InterPro" id="IPR015351">
    <property type="entry name" value="RBP-J/Cbf11/Cbf12_DNA-bd"/>
</dbReference>
<dbReference type="InterPro" id="IPR037095">
    <property type="entry name" value="RBP-J/Cbf11_DNA-bd_sf"/>
</dbReference>
<dbReference type="InterPro" id="IPR038007">
    <property type="entry name" value="RBP-Jkappa_IPT"/>
</dbReference>
<dbReference type="PANTHER" id="PTHR10665">
    <property type="entry name" value="RECOMBINING BINDING PROTEIN SUPPRESSOR OF HAIRLESS"/>
    <property type="match status" value="1"/>
</dbReference>
<dbReference type="Pfam" id="PF09270">
    <property type="entry name" value="BTD"/>
    <property type="match status" value="1"/>
</dbReference>
<dbReference type="Pfam" id="PF09271">
    <property type="entry name" value="LAG1-DNAbind"/>
    <property type="match status" value="1"/>
</dbReference>
<dbReference type="Pfam" id="PF20144">
    <property type="entry name" value="TIG_SUH"/>
    <property type="match status" value="1"/>
</dbReference>
<dbReference type="SMART" id="SM01268">
    <property type="entry name" value="BTD"/>
    <property type="match status" value="1"/>
</dbReference>
<dbReference type="SMART" id="SM01267">
    <property type="entry name" value="LAG1_DNAbind"/>
    <property type="match status" value="1"/>
</dbReference>
<dbReference type="SUPFAM" id="SSF110217">
    <property type="entry name" value="DNA-binding protein LAG-1 (CSL)"/>
    <property type="match status" value="1"/>
</dbReference>
<dbReference type="SUPFAM" id="SSF81296">
    <property type="entry name" value="E set domains"/>
    <property type="match status" value="1"/>
</dbReference>
<dbReference type="SUPFAM" id="SSF49417">
    <property type="entry name" value="p53-like transcription factors"/>
    <property type="match status" value="1"/>
</dbReference>
<reference key="1">
    <citation type="submission" date="1999-05" db="EMBL/GenBank/DDBJ databases">
        <title>Human mRNA for transcription factor RBP-L.</title>
        <authorList>
            <person name="Saito T."/>
            <person name="Miyajima N."/>
        </authorList>
    </citation>
    <scope>NUCLEOTIDE SEQUENCE [MRNA] (ISOFORM 2)</scope>
</reference>
<reference key="2">
    <citation type="submission" date="1999-04" db="EMBL/GenBank/DDBJ databases">
        <authorList>
            <person name="Isaka S."/>
            <person name="Koyama K."/>
            <person name="Nakamura Y."/>
            <person name="Okamura S."/>
            <person name="Azuma C."/>
            <person name="Kimura T."/>
        </authorList>
    </citation>
    <scope>NUCLEOTIDE SEQUENCE [MRNA] (ISOFORM 2)</scope>
</reference>
<reference key="3">
    <citation type="journal article" date="2001" name="Nature">
        <title>The DNA sequence and comparative analysis of human chromosome 20.</title>
        <authorList>
            <person name="Deloukas P."/>
            <person name="Matthews L.H."/>
            <person name="Ashurst J.L."/>
            <person name="Burton J."/>
            <person name="Gilbert J.G.R."/>
            <person name="Jones M."/>
            <person name="Stavrides G."/>
            <person name="Almeida J.P."/>
            <person name="Babbage A.K."/>
            <person name="Bagguley C.L."/>
            <person name="Bailey J."/>
            <person name="Barlow K.F."/>
            <person name="Bates K.N."/>
            <person name="Beard L.M."/>
            <person name="Beare D.M."/>
            <person name="Beasley O.P."/>
            <person name="Bird C.P."/>
            <person name="Blakey S.E."/>
            <person name="Bridgeman A.M."/>
            <person name="Brown A.J."/>
            <person name="Buck D."/>
            <person name="Burrill W.D."/>
            <person name="Butler A.P."/>
            <person name="Carder C."/>
            <person name="Carter N.P."/>
            <person name="Chapman J.C."/>
            <person name="Clamp M."/>
            <person name="Clark G."/>
            <person name="Clark L.N."/>
            <person name="Clark S.Y."/>
            <person name="Clee C.M."/>
            <person name="Clegg S."/>
            <person name="Cobley V.E."/>
            <person name="Collier R.E."/>
            <person name="Connor R.E."/>
            <person name="Corby N.R."/>
            <person name="Coulson A."/>
            <person name="Coville G.J."/>
            <person name="Deadman R."/>
            <person name="Dhami P.D."/>
            <person name="Dunn M."/>
            <person name="Ellington A.G."/>
            <person name="Frankland J.A."/>
            <person name="Fraser A."/>
            <person name="French L."/>
            <person name="Garner P."/>
            <person name="Grafham D.V."/>
            <person name="Griffiths C."/>
            <person name="Griffiths M.N.D."/>
            <person name="Gwilliam R."/>
            <person name="Hall R.E."/>
            <person name="Hammond S."/>
            <person name="Harley J.L."/>
            <person name="Heath P.D."/>
            <person name="Ho S."/>
            <person name="Holden J.L."/>
            <person name="Howden P.J."/>
            <person name="Huckle E."/>
            <person name="Hunt A.R."/>
            <person name="Hunt S.E."/>
            <person name="Jekosch K."/>
            <person name="Johnson C.M."/>
            <person name="Johnson D."/>
            <person name="Kay M.P."/>
            <person name="Kimberley A.M."/>
            <person name="King A."/>
            <person name="Knights A."/>
            <person name="Laird G.K."/>
            <person name="Lawlor S."/>
            <person name="Lehvaeslaiho M.H."/>
            <person name="Leversha M.A."/>
            <person name="Lloyd C."/>
            <person name="Lloyd D.M."/>
            <person name="Lovell J.D."/>
            <person name="Marsh V.L."/>
            <person name="Martin S.L."/>
            <person name="McConnachie L.J."/>
            <person name="McLay K."/>
            <person name="McMurray A.A."/>
            <person name="Milne S.A."/>
            <person name="Mistry D."/>
            <person name="Moore M.J.F."/>
            <person name="Mullikin J.C."/>
            <person name="Nickerson T."/>
            <person name="Oliver K."/>
            <person name="Parker A."/>
            <person name="Patel R."/>
            <person name="Pearce T.A.V."/>
            <person name="Peck A.I."/>
            <person name="Phillimore B.J.C.T."/>
            <person name="Prathalingam S.R."/>
            <person name="Plumb R.W."/>
            <person name="Ramsay H."/>
            <person name="Rice C.M."/>
            <person name="Ross M.T."/>
            <person name="Scott C.E."/>
            <person name="Sehra H.K."/>
            <person name="Shownkeen R."/>
            <person name="Sims S."/>
            <person name="Skuce C.D."/>
            <person name="Smith M.L."/>
            <person name="Soderlund C."/>
            <person name="Steward C.A."/>
            <person name="Sulston J.E."/>
            <person name="Swann R.M."/>
            <person name="Sycamore N."/>
            <person name="Taylor R."/>
            <person name="Tee L."/>
            <person name="Thomas D.W."/>
            <person name="Thorpe A."/>
            <person name="Tracey A."/>
            <person name="Tromans A.C."/>
            <person name="Vaudin M."/>
            <person name="Wall M."/>
            <person name="Wallis J.M."/>
            <person name="Whitehead S.L."/>
            <person name="Whittaker P."/>
            <person name="Willey D.L."/>
            <person name="Williams L."/>
            <person name="Williams S.A."/>
            <person name="Wilming L."/>
            <person name="Wray P.W."/>
            <person name="Hubbard T."/>
            <person name="Durbin R.M."/>
            <person name="Bentley D.R."/>
            <person name="Beck S."/>
            <person name="Rogers J."/>
        </authorList>
    </citation>
    <scope>NUCLEOTIDE SEQUENCE [LARGE SCALE GENOMIC DNA]</scope>
</reference>
<reference key="4">
    <citation type="submission" date="2005-09" db="EMBL/GenBank/DDBJ databases">
        <authorList>
            <person name="Mural R.J."/>
            <person name="Istrail S."/>
            <person name="Sutton G.G."/>
            <person name="Florea L."/>
            <person name="Halpern A.L."/>
            <person name="Mobarry C.M."/>
            <person name="Lippert R."/>
            <person name="Walenz B."/>
            <person name="Shatkay H."/>
            <person name="Dew I."/>
            <person name="Miller J.R."/>
            <person name="Flanigan M.J."/>
            <person name="Edwards N.J."/>
            <person name="Bolanos R."/>
            <person name="Fasulo D."/>
            <person name="Halldorsson B.V."/>
            <person name="Hannenhalli S."/>
            <person name="Turner R."/>
            <person name="Yooseph S."/>
            <person name="Lu F."/>
            <person name="Nusskern D.R."/>
            <person name="Shue B.C."/>
            <person name="Zheng X.H."/>
            <person name="Zhong F."/>
            <person name="Delcher A.L."/>
            <person name="Huson D.H."/>
            <person name="Kravitz S.A."/>
            <person name="Mouchard L."/>
            <person name="Reinert K."/>
            <person name="Remington K.A."/>
            <person name="Clark A.G."/>
            <person name="Waterman M.S."/>
            <person name="Eichler E.E."/>
            <person name="Adams M.D."/>
            <person name="Hunkapiller M.W."/>
            <person name="Myers E.W."/>
            <person name="Venter J.C."/>
        </authorList>
    </citation>
    <scope>NUCLEOTIDE SEQUENCE [LARGE SCALE GENOMIC DNA]</scope>
</reference>
<name>RBPJL_HUMAN</name>
<keyword id="KW-0025">Alternative splicing</keyword>
<keyword id="KW-0238">DNA-binding</keyword>
<keyword id="KW-0539">Nucleus</keyword>
<keyword id="KW-1267">Proteomics identification</keyword>
<keyword id="KW-1185">Reference proteome</keyword>
<keyword id="KW-0804">Transcription</keyword>
<keyword id="KW-0805">Transcription regulation</keyword>
<accession>Q9UBG7</accession>
<accession>O95723</accession>
<accession>Q5QPU9</accession>
<accession>Q5QPV0</accession>
<accession>Q9ULV9</accession>
<protein>
    <recommendedName>
        <fullName>Recombining binding protein suppressor of hairless-like protein</fullName>
    </recommendedName>
    <alternativeName>
        <fullName>Transcription factor RBP-L</fullName>
    </alternativeName>
</protein>
<comment type="function">
    <text evidence="1">Putative transcription factor, which cooperates with EBNA2 to activate transcription.</text>
</comment>
<comment type="subunit">
    <text evidence="1">Interacts weakly with EBNA2. Does not interact with any Notch proteins (By similarity).</text>
</comment>
<comment type="interaction">
    <interactant intactId="EBI-12346485">
        <id>Q9UBG7</id>
    </interactant>
    <interactant intactId="EBI-16439278">
        <id>Q6FHY5</id>
        <label>MEOX2</label>
    </interactant>
    <organismsDiffer>false</organismsDiffer>
    <experiments>3</experiments>
</comment>
<comment type="subcellular location">
    <subcellularLocation>
        <location evidence="6">Nucleus</location>
    </subcellularLocation>
</comment>
<comment type="alternative products">
    <event type="alternative splicing"/>
    <isoform>
        <id>Q9UBG7-1</id>
        <name>1</name>
        <sequence type="displayed"/>
    </isoform>
    <isoform>
        <id>Q9UBG7-2</id>
        <name>2</name>
        <sequence type="described" ref="VSP_039150"/>
    </isoform>
</comment>
<comment type="similarity">
    <text evidence="6">Belongs to the Su(H) family.</text>
</comment>